<feature type="chain" id="PRO_0000054192" description="Aromatic amino acid transport protein AroP">
    <location>
        <begin position="1"/>
        <end position="463"/>
    </location>
</feature>
<feature type="transmembrane region" description="Helical" evidence="1">
    <location>
        <begin position="18"/>
        <end position="38"/>
    </location>
</feature>
<feature type="transmembrane region" description="Helical" evidence="1">
    <location>
        <begin position="40"/>
        <end position="60"/>
    </location>
</feature>
<feature type="transmembrane region" description="Helical" evidence="1">
    <location>
        <begin position="84"/>
        <end position="104"/>
    </location>
</feature>
<feature type="transmembrane region" description="Helical" evidence="1">
    <location>
        <begin position="117"/>
        <end position="137"/>
    </location>
</feature>
<feature type="transmembrane region" description="Helical" evidence="1">
    <location>
        <begin position="157"/>
        <end position="177"/>
    </location>
</feature>
<feature type="transmembrane region" description="Helical" evidence="1">
    <location>
        <begin position="200"/>
        <end position="220"/>
    </location>
</feature>
<feature type="transmembrane region" description="Helical" evidence="1">
    <location>
        <begin position="237"/>
        <end position="257"/>
    </location>
</feature>
<feature type="transmembrane region" description="Helical" evidence="1">
    <location>
        <begin position="276"/>
        <end position="296"/>
    </location>
</feature>
<feature type="transmembrane region" description="Helical" evidence="1">
    <location>
        <begin position="337"/>
        <end position="357"/>
    </location>
</feature>
<feature type="transmembrane region" description="Helical" evidence="1">
    <location>
        <begin position="358"/>
        <end position="378"/>
    </location>
</feature>
<feature type="transmembrane region" description="Helical" evidence="1">
    <location>
        <begin position="402"/>
        <end position="422"/>
    </location>
</feature>
<feature type="transmembrane region" description="Helical" evidence="1">
    <location>
        <begin position="431"/>
        <end position="451"/>
    </location>
</feature>
<organism>
    <name type="scientific">Corynebacterium glutamicum (strain ATCC 13032 / DSM 20300 / JCM 1318 / BCRC 11384 / CCUG 27702 / LMG 3730 / NBRC 12168 / NCIMB 10025 / NRRL B-2784 / 534)</name>
    <dbReference type="NCBI Taxonomy" id="196627"/>
    <lineage>
        <taxon>Bacteria</taxon>
        <taxon>Bacillati</taxon>
        <taxon>Actinomycetota</taxon>
        <taxon>Actinomycetes</taxon>
        <taxon>Mycobacteriales</taxon>
        <taxon>Corynebacteriaceae</taxon>
        <taxon>Corynebacterium</taxon>
    </lineage>
</organism>
<name>AROP_CORGL</name>
<reference key="1">
    <citation type="journal article" date="1995" name="J. Bacteriol.">
        <title>Functional analysis of sequences adjacent to dapE of Corynebacterium glutamicum reveals the presence of aroP, which encodes the aromatic amino acid transporter.</title>
        <authorList>
            <person name="Wehrmann A."/>
            <person name="Morakkabati S."/>
            <person name="Kraemer R."/>
            <person name="Sahm H."/>
            <person name="Eggeling L."/>
        </authorList>
    </citation>
    <scope>NUCLEOTIDE SEQUENCE [GENOMIC DNA]</scope>
    <scope>FUNCTION</scope>
    <scope>CATALYTIC ACTIVITY</scope>
    <scope>DISRUPTION PHENOTYPE</scope>
    <source>
        <strain>ATCC 13032 / DSM 20300 / JCM 1318 / BCRC 11384 / CCUG 27702 / LMG 3730 / NBRC 12168 / NCIMB 10025 / NRRL B-2784 / 534</strain>
    </source>
</reference>
<reference key="2">
    <citation type="journal article" date="2003" name="Appl. Microbiol. Biotechnol.">
        <title>The Corynebacterium glutamicum genome: features and impacts on biotechnological processes.</title>
        <authorList>
            <person name="Ikeda M."/>
            <person name="Nakagawa S."/>
        </authorList>
    </citation>
    <scope>NUCLEOTIDE SEQUENCE [LARGE SCALE GENOMIC DNA]</scope>
    <source>
        <strain>ATCC 13032 / DSM 20300 / JCM 1318 / BCRC 11384 / CCUG 27702 / LMG 3730 / NBRC 12168 / NCIMB 10025 / NRRL B-2784 / 534</strain>
    </source>
</reference>
<reference key="3">
    <citation type="journal article" date="2003" name="J. Biotechnol.">
        <title>The complete Corynebacterium glutamicum ATCC 13032 genome sequence and its impact on the production of L-aspartate-derived amino acids and vitamins.</title>
        <authorList>
            <person name="Kalinowski J."/>
            <person name="Bathe B."/>
            <person name="Bartels D."/>
            <person name="Bischoff N."/>
            <person name="Bott M."/>
            <person name="Burkovski A."/>
            <person name="Dusch N."/>
            <person name="Eggeling L."/>
            <person name="Eikmanns B.J."/>
            <person name="Gaigalat L."/>
            <person name="Goesmann A."/>
            <person name="Hartmann M."/>
            <person name="Huthmacher K."/>
            <person name="Kraemer R."/>
            <person name="Linke B."/>
            <person name="McHardy A.C."/>
            <person name="Meyer F."/>
            <person name="Moeckel B."/>
            <person name="Pfefferle W."/>
            <person name="Puehler A."/>
            <person name="Rey D.A."/>
            <person name="Rueckert C."/>
            <person name="Rupp O."/>
            <person name="Sahm H."/>
            <person name="Wendisch V.F."/>
            <person name="Wiegraebe I."/>
            <person name="Tauch A."/>
        </authorList>
    </citation>
    <scope>NUCLEOTIDE SEQUENCE [LARGE SCALE GENOMIC DNA]</scope>
    <source>
        <strain>ATCC 13032 / DSM 20300 / JCM 1318 / BCRC 11384 / CCUG 27702 / LMG 3730 / NBRC 12168 / NCIMB 10025 / NRRL B-2784 / 534</strain>
    </source>
</reference>
<accession>Q46065</accession>
<keyword id="KW-0029">Amino-acid transport</keyword>
<keyword id="KW-1003">Cell membrane</keyword>
<keyword id="KW-0472">Membrane</keyword>
<keyword id="KW-1185">Reference proteome</keyword>
<keyword id="KW-0812">Transmembrane</keyword>
<keyword id="KW-1133">Transmembrane helix</keyword>
<keyword id="KW-0813">Transport</keyword>
<protein>
    <recommendedName>
        <fullName>Aromatic amino acid transport protein AroP</fullName>
    </recommendedName>
    <alternativeName>
        <fullName>General aromatic amino acid permease</fullName>
    </alternativeName>
</protein>
<sequence>MAKSNEGLGTGLRTRHLTMMGLGSAIGAGLFLGTGVGIRAAGPAVLLAYIIAGAIVVLVMQMLGEMAAARPASGSFSRYGEDAFGHWAGFSLGWLYWFMLIMVMGAEMTGAAAIMGAWFGVEPWIPSLVCVVFFAVVNLVAVRGFGEFEYWFAFIKVAVIIAFLIIGIALIFGWLPGSTFVGTSNFIGDHGFMPNGISGVAAGLLAVAFAFGGIEIVTIAAAESDKPREAISLAVRAVIWRISVFYLGSVLVITFLMPYESINGADTAAESPFTQILAMANIPGTVGFMEAIIVLALLSAFNAQIYATSRLVFSMANRQDAPRVFSKLSTSHVPTNAVLLSMFFAFVSVGLQYWNPAGLLDFLLNAVGGCLIVVWAMITLSQLKLRKELQANDEISTVRMWAHPWLGILTLVLLAGLVALMLGDAASRSQVYSVAIVYGFLVLLSFVTVNSPLRGGRTPSDLN</sequence>
<comment type="function">
    <text evidence="5">Permease that is involved in the active transport across the cytoplasmic membrane of all three aromatic amino acids, phenylalanine, tyrosine and tryptophan.</text>
</comment>
<comment type="catalytic activity">
    <reaction evidence="5">
        <text>L-phenylalanine(in) + H(+)(in) = L-phenylalanine(out) + H(+)(out)</text>
        <dbReference type="Rhea" id="RHEA:28923"/>
        <dbReference type="ChEBI" id="CHEBI:15378"/>
        <dbReference type="ChEBI" id="CHEBI:58095"/>
    </reaction>
    <physiologicalReaction direction="right-to-left" evidence="5">
        <dbReference type="Rhea" id="RHEA:28925"/>
    </physiologicalReaction>
</comment>
<comment type="catalytic activity">
    <reaction evidence="5">
        <text>L-tryptophan(in) + H(+)(in) = L-tryptophan(out) + H(+)(out)</text>
        <dbReference type="Rhea" id="RHEA:28879"/>
        <dbReference type="ChEBI" id="CHEBI:15378"/>
        <dbReference type="ChEBI" id="CHEBI:57912"/>
    </reaction>
    <physiologicalReaction direction="right-to-left" evidence="5">
        <dbReference type="Rhea" id="RHEA:28881"/>
    </physiologicalReaction>
</comment>
<comment type="catalytic activity">
    <reaction evidence="5">
        <text>L-tyrosine(in) + H(+)(in) = L-tyrosine(out) + H(+)(out)</text>
        <dbReference type="Rhea" id="RHEA:28875"/>
        <dbReference type="ChEBI" id="CHEBI:15378"/>
        <dbReference type="ChEBI" id="CHEBI:58315"/>
    </reaction>
    <physiologicalReaction direction="right-to-left" evidence="5">
        <dbReference type="Rhea" id="RHEA:28877"/>
    </physiologicalReaction>
</comment>
<comment type="subcellular location">
    <subcellularLocation>
        <location evidence="4">Cell membrane</location>
        <topology evidence="1">Multi-pass membrane protein</topology>
    </subcellularLocation>
</comment>
<comment type="disruption phenotype">
    <text evidence="2">Mutants show reduced aromatic amino acids uptake.</text>
</comment>
<comment type="similarity">
    <text evidence="4">Belongs to the amino acid-polyamine-organocation (APC) superfamily. Amino acid transporter (AAT) (TC 2.A.3.1) family.</text>
</comment>
<proteinExistence type="evidence at protein level"/>
<evidence type="ECO:0000255" key="1"/>
<evidence type="ECO:0000269" key="2">
    <source>
    </source>
</evidence>
<evidence type="ECO:0000303" key="3">
    <source>
    </source>
</evidence>
<evidence type="ECO:0000305" key="4"/>
<evidence type="ECO:0000305" key="5">
    <source>
    </source>
</evidence>
<dbReference type="EMBL" id="X85965">
    <property type="protein sequence ID" value="CAA59950.1"/>
    <property type="molecule type" value="Genomic_DNA"/>
</dbReference>
<dbReference type="EMBL" id="BA000036">
    <property type="protein sequence ID" value="BAB98500.1"/>
    <property type="molecule type" value="Genomic_DNA"/>
</dbReference>
<dbReference type="EMBL" id="BX927151">
    <property type="protein sequence ID" value="CAF19813.1"/>
    <property type="molecule type" value="Genomic_DNA"/>
</dbReference>
<dbReference type="PIR" id="S52754">
    <property type="entry name" value="S52754"/>
</dbReference>
<dbReference type="RefSeq" id="NP_600335.2">
    <property type="nucleotide sequence ID" value="NC_003450.3"/>
</dbReference>
<dbReference type="RefSeq" id="WP_011014125.1">
    <property type="nucleotide sequence ID" value="NC_006958.1"/>
</dbReference>
<dbReference type="SMR" id="Q46065"/>
<dbReference type="STRING" id="196627.cg1257"/>
<dbReference type="TCDB" id="2.A.3.1.12">
    <property type="family name" value="the amino acid-polyamine-organocation (apc) family"/>
</dbReference>
<dbReference type="GeneID" id="1019092"/>
<dbReference type="KEGG" id="cgb:cg1257"/>
<dbReference type="KEGG" id="cgl:Cgl1107"/>
<dbReference type="PATRIC" id="fig|196627.13.peg.1086"/>
<dbReference type="eggNOG" id="COG1113">
    <property type="taxonomic scope" value="Bacteria"/>
</dbReference>
<dbReference type="HOGENOM" id="CLU_007946_9_2_11"/>
<dbReference type="OrthoDB" id="5297508at2"/>
<dbReference type="BioCyc" id="CORYNE:G18NG-10679-MONOMER"/>
<dbReference type="Proteomes" id="UP000000582">
    <property type="component" value="Chromosome"/>
</dbReference>
<dbReference type="Proteomes" id="UP000001009">
    <property type="component" value="Chromosome"/>
</dbReference>
<dbReference type="GO" id="GO:0005886">
    <property type="term" value="C:plasma membrane"/>
    <property type="evidence" value="ECO:0007669"/>
    <property type="project" value="UniProtKB-SubCell"/>
</dbReference>
<dbReference type="GO" id="GO:0006865">
    <property type="term" value="P:amino acid transport"/>
    <property type="evidence" value="ECO:0007669"/>
    <property type="project" value="UniProtKB-KW"/>
</dbReference>
<dbReference type="GO" id="GO:0055085">
    <property type="term" value="P:transmembrane transport"/>
    <property type="evidence" value="ECO:0007669"/>
    <property type="project" value="InterPro"/>
</dbReference>
<dbReference type="FunFam" id="1.20.1740.10:FF:000001">
    <property type="entry name" value="Amino acid permease"/>
    <property type="match status" value="1"/>
</dbReference>
<dbReference type="Gene3D" id="1.20.1740.10">
    <property type="entry name" value="Amino acid/polyamine transporter I"/>
    <property type="match status" value="1"/>
</dbReference>
<dbReference type="InterPro" id="IPR004841">
    <property type="entry name" value="AA-permease/SLC12A_dom"/>
</dbReference>
<dbReference type="InterPro" id="IPR004840">
    <property type="entry name" value="Amino_acid_permease_CS"/>
</dbReference>
<dbReference type="PANTHER" id="PTHR43495">
    <property type="entry name" value="GABA PERMEASE"/>
    <property type="match status" value="1"/>
</dbReference>
<dbReference type="PANTHER" id="PTHR43495:SF5">
    <property type="entry name" value="GAMMA-AMINOBUTYRIC ACID PERMEASE"/>
    <property type="match status" value="1"/>
</dbReference>
<dbReference type="Pfam" id="PF00324">
    <property type="entry name" value="AA_permease"/>
    <property type="match status" value="1"/>
</dbReference>
<dbReference type="PIRSF" id="PIRSF006060">
    <property type="entry name" value="AA_transporter"/>
    <property type="match status" value="1"/>
</dbReference>
<dbReference type="PROSITE" id="PS00218">
    <property type="entry name" value="AMINO_ACID_PERMEASE_1"/>
    <property type="match status" value="1"/>
</dbReference>
<gene>
    <name evidence="3" type="primary">aroP</name>
    <name type="ordered locus">Cgl1107</name>
    <name type="ordered locus">cg1257</name>
</gene>